<proteinExistence type="inferred from homology"/>
<organism>
    <name type="scientific">Methylococcus capsulatus (strain ATCC 33009 / NCIMB 11132 / Bath)</name>
    <dbReference type="NCBI Taxonomy" id="243233"/>
    <lineage>
        <taxon>Bacteria</taxon>
        <taxon>Pseudomonadati</taxon>
        <taxon>Pseudomonadota</taxon>
        <taxon>Gammaproteobacteria</taxon>
        <taxon>Methylococcales</taxon>
        <taxon>Methylococcaceae</taxon>
        <taxon>Methylococcus</taxon>
    </lineage>
</organism>
<dbReference type="EC" id="3.6.1.66" evidence="1"/>
<dbReference type="EMBL" id="AE017282">
    <property type="protein sequence ID" value="AAU90933.1"/>
    <property type="molecule type" value="Genomic_DNA"/>
</dbReference>
<dbReference type="RefSeq" id="WP_010962211.1">
    <property type="nucleotide sequence ID" value="NC_002977.6"/>
</dbReference>
<dbReference type="SMR" id="Q602P0"/>
<dbReference type="STRING" id="243233.MCA3023"/>
<dbReference type="GeneID" id="88225187"/>
<dbReference type="KEGG" id="mca:MCA3023"/>
<dbReference type="eggNOG" id="COG0127">
    <property type="taxonomic scope" value="Bacteria"/>
</dbReference>
<dbReference type="HOGENOM" id="CLU_082080_0_3_6"/>
<dbReference type="Proteomes" id="UP000006821">
    <property type="component" value="Chromosome"/>
</dbReference>
<dbReference type="GO" id="GO:0005829">
    <property type="term" value="C:cytosol"/>
    <property type="evidence" value="ECO:0007669"/>
    <property type="project" value="TreeGrafter"/>
</dbReference>
<dbReference type="GO" id="GO:0035870">
    <property type="term" value="F:dITP diphosphatase activity"/>
    <property type="evidence" value="ECO:0007669"/>
    <property type="project" value="RHEA"/>
</dbReference>
<dbReference type="GO" id="GO:0036220">
    <property type="term" value="F:ITP diphosphatase activity"/>
    <property type="evidence" value="ECO:0007669"/>
    <property type="project" value="UniProtKB-EC"/>
</dbReference>
<dbReference type="GO" id="GO:0046872">
    <property type="term" value="F:metal ion binding"/>
    <property type="evidence" value="ECO:0007669"/>
    <property type="project" value="UniProtKB-KW"/>
</dbReference>
<dbReference type="GO" id="GO:0000166">
    <property type="term" value="F:nucleotide binding"/>
    <property type="evidence" value="ECO:0007669"/>
    <property type="project" value="UniProtKB-KW"/>
</dbReference>
<dbReference type="GO" id="GO:0017111">
    <property type="term" value="F:ribonucleoside triphosphate phosphatase activity"/>
    <property type="evidence" value="ECO:0007669"/>
    <property type="project" value="InterPro"/>
</dbReference>
<dbReference type="GO" id="GO:0036222">
    <property type="term" value="F:XTP diphosphatase activity"/>
    <property type="evidence" value="ECO:0007669"/>
    <property type="project" value="RHEA"/>
</dbReference>
<dbReference type="GO" id="GO:0009117">
    <property type="term" value="P:nucleotide metabolic process"/>
    <property type="evidence" value="ECO:0007669"/>
    <property type="project" value="UniProtKB-KW"/>
</dbReference>
<dbReference type="GO" id="GO:0009146">
    <property type="term" value="P:purine nucleoside triphosphate catabolic process"/>
    <property type="evidence" value="ECO:0007669"/>
    <property type="project" value="UniProtKB-UniRule"/>
</dbReference>
<dbReference type="CDD" id="cd00515">
    <property type="entry name" value="HAM1"/>
    <property type="match status" value="1"/>
</dbReference>
<dbReference type="FunFam" id="3.90.950.10:FF:000001">
    <property type="entry name" value="dITP/XTP pyrophosphatase"/>
    <property type="match status" value="1"/>
</dbReference>
<dbReference type="Gene3D" id="3.90.950.10">
    <property type="match status" value="1"/>
</dbReference>
<dbReference type="HAMAP" id="MF_01405">
    <property type="entry name" value="Non_canon_purine_NTPase"/>
    <property type="match status" value="1"/>
</dbReference>
<dbReference type="InterPro" id="IPR020922">
    <property type="entry name" value="dITP/XTP_pyrophosphatase"/>
</dbReference>
<dbReference type="InterPro" id="IPR029001">
    <property type="entry name" value="ITPase-like_fam"/>
</dbReference>
<dbReference type="InterPro" id="IPR002637">
    <property type="entry name" value="RdgB/HAM1"/>
</dbReference>
<dbReference type="NCBIfam" id="TIGR00042">
    <property type="entry name" value="RdgB/HAM1 family non-canonical purine NTP pyrophosphatase"/>
    <property type="match status" value="1"/>
</dbReference>
<dbReference type="PANTHER" id="PTHR11067:SF9">
    <property type="entry name" value="INOSINE TRIPHOSPHATE PYROPHOSPHATASE"/>
    <property type="match status" value="1"/>
</dbReference>
<dbReference type="PANTHER" id="PTHR11067">
    <property type="entry name" value="INOSINE TRIPHOSPHATE PYROPHOSPHATASE/HAM1 PROTEIN"/>
    <property type="match status" value="1"/>
</dbReference>
<dbReference type="Pfam" id="PF01725">
    <property type="entry name" value="Ham1p_like"/>
    <property type="match status" value="1"/>
</dbReference>
<dbReference type="SUPFAM" id="SSF52972">
    <property type="entry name" value="ITPase-like"/>
    <property type="match status" value="1"/>
</dbReference>
<accession>Q602P0</accession>
<sequence length="201" mass="21017">MRRKLVLASNNAGKVRELQTLISTSGFEIVPQGALGIPEAEETGASFVENALIKAYHAARHSGLPAIADDSGLEVDALGGEPGVHSARYAGPAASDDDNIDRLLAALDGVEAGRRGARFRCVMVFVRDAEDTGPLIAEGCWEGWIGENRRGSGGFGYDPVFLVPGTGLSAAELPPEDKNRLSHRGQAAAVLASRLRALTGG</sequence>
<name>IXTPA_METCA</name>
<gene>
    <name type="ordered locus">MCA3023</name>
</gene>
<protein>
    <recommendedName>
        <fullName evidence="1">dITP/XTP pyrophosphatase</fullName>
        <ecNumber evidence="1">3.6.1.66</ecNumber>
    </recommendedName>
    <alternativeName>
        <fullName evidence="1">Non-canonical purine NTP pyrophosphatase</fullName>
    </alternativeName>
    <alternativeName>
        <fullName evidence="1">Non-standard purine NTP pyrophosphatase</fullName>
    </alternativeName>
    <alternativeName>
        <fullName evidence="1">Nucleoside-triphosphate diphosphatase</fullName>
    </alternativeName>
    <alternativeName>
        <fullName evidence="1">Nucleoside-triphosphate pyrophosphatase</fullName>
        <shortName evidence="1">NTPase</shortName>
    </alternativeName>
</protein>
<evidence type="ECO:0000255" key="1">
    <source>
        <dbReference type="HAMAP-Rule" id="MF_01405"/>
    </source>
</evidence>
<comment type="function">
    <text evidence="1">Pyrophosphatase that catalyzes the hydrolysis of nucleoside triphosphates to their monophosphate derivatives, with a high preference for the non-canonical purine nucleotides XTP (xanthosine triphosphate), dITP (deoxyinosine triphosphate) and ITP. Seems to function as a house-cleaning enzyme that removes non-canonical purine nucleotides from the nucleotide pool, thus preventing their incorporation into DNA/RNA and avoiding chromosomal lesions.</text>
</comment>
<comment type="catalytic activity">
    <reaction evidence="1">
        <text>XTP + H2O = XMP + diphosphate + H(+)</text>
        <dbReference type="Rhea" id="RHEA:28610"/>
        <dbReference type="ChEBI" id="CHEBI:15377"/>
        <dbReference type="ChEBI" id="CHEBI:15378"/>
        <dbReference type="ChEBI" id="CHEBI:33019"/>
        <dbReference type="ChEBI" id="CHEBI:57464"/>
        <dbReference type="ChEBI" id="CHEBI:61314"/>
        <dbReference type="EC" id="3.6.1.66"/>
    </reaction>
</comment>
<comment type="catalytic activity">
    <reaction evidence="1">
        <text>dITP + H2O = dIMP + diphosphate + H(+)</text>
        <dbReference type="Rhea" id="RHEA:28342"/>
        <dbReference type="ChEBI" id="CHEBI:15377"/>
        <dbReference type="ChEBI" id="CHEBI:15378"/>
        <dbReference type="ChEBI" id="CHEBI:33019"/>
        <dbReference type="ChEBI" id="CHEBI:61194"/>
        <dbReference type="ChEBI" id="CHEBI:61382"/>
        <dbReference type="EC" id="3.6.1.66"/>
    </reaction>
</comment>
<comment type="catalytic activity">
    <reaction evidence="1">
        <text>ITP + H2O = IMP + diphosphate + H(+)</text>
        <dbReference type="Rhea" id="RHEA:29399"/>
        <dbReference type="ChEBI" id="CHEBI:15377"/>
        <dbReference type="ChEBI" id="CHEBI:15378"/>
        <dbReference type="ChEBI" id="CHEBI:33019"/>
        <dbReference type="ChEBI" id="CHEBI:58053"/>
        <dbReference type="ChEBI" id="CHEBI:61402"/>
        <dbReference type="EC" id="3.6.1.66"/>
    </reaction>
</comment>
<comment type="cofactor">
    <cofactor evidence="1">
        <name>Mg(2+)</name>
        <dbReference type="ChEBI" id="CHEBI:18420"/>
    </cofactor>
    <text evidence="1">Binds 1 Mg(2+) ion per subunit.</text>
</comment>
<comment type="subunit">
    <text evidence="1">Homodimer.</text>
</comment>
<comment type="similarity">
    <text evidence="1">Belongs to the HAM1 NTPase family.</text>
</comment>
<reference key="1">
    <citation type="journal article" date="2004" name="PLoS Biol.">
        <title>Genomic insights into methanotrophy: the complete genome sequence of Methylococcus capsulatus (Bath).</title>
        <authorList>
            <person name="Ward N.L."/>
            <person name="Larsen O."/>
            <person name="Sakwa J."/>
            <person name="Bruseth L."/>
            <person name="Khouri H.M."/>
            <person name="Durkin A.S."/>
            <person name="Dimitrov G."/>
            <person name="Jiang L."/>
            <person name="Scanlan D."/>
            <person name="Kang K.H."/>
            <person name="Lewis M.R."/>
            <person name="Nelson K.E."/>
            <person name="Methe B.A."/>
            <person name="Wu M."/>
            <person name="Heidelberg J.F."/>
            <person name="Paulsen I.T."/>
            <person name="Fouts D.E."/>
            <person name="Ravel J."/>
            <person name="Tettelin H."/>
            <person name="Ren Q."/>
            <person name="Read T.D."/>
            <person name="DeBoy R.T."/>
            <person name="Seshadri R."/>
            <person name="Salzberg S.L."/>
            <person name="Jensen H.B."/>
            <person name="Birkeland N.K."/>
            <person name="Nelson W.C."/>
            <person name="Dodson R.J."/>
            <person name="Grindhaug S.H."/>
            <person name="Holt I.E."/>
            <person name="Eidhammer I."/>
            <person name="Jonasen I."/>
            <person name="Vanaken S."/>
            <person name="Utterback T.R."/>
            <person name="Feldblyum T.V."/>
            <person name="Fraser C.M."/>
            <person name="Lillehaug J.R."/>
            <person name="Eisen J.A."/>
        </authorList>
    </citation>
    <scope>NUCLEOTIDE SEQUENCE [LARGE SCALE GENOMIC DNA]</scope>
    <source>
        <strain>ATCC 33009 / NCIMB 11132 / Bath</strain>
    </source>
</reference>
<feature type="chain" id="PRO_0000178192" description="dITP/XTP pyrophosphatase">
    <location>
        <begin position="1"/>
        <end position="201"/>
    </location>
</feature>
<feature type="active site" description="Proton acceptor" evidence="1">
    <location>
        <position position="70"/>
    </location>
</feature>
<feature type="binding site" evidence="1">
    <location>
        <begin position="9"/>
        <end position="14"/>
    </location>
    <ligand>
        <name>substrate</name>
    </ligand>
</feature>
<feature type="binding site" evidence="1">
    <location>
        <position position="41"/>
    </location>
    <ligand>
        <name>Mg(2+)</name>
        <dbReference type="ChEBI" id="CHEBI:18420"/>
    </ligand>
</feature>
<feature type="binding site" evidence="1">
    <location>
        <position position="70"/>
    </location>
    <ligand>
        <name>Mg(2+)</name>
        <dbReference type="ChEBI" id="CHEBI:18420"/>
    </ligand>
</feature>
<feature type="binding site" evidence="1">
    <location>
        <position position="71"/>
    </location>
    <ligand>
        <name>substrate</name>
    </ligand>
</feature>
<feature type="binding site" evidence="1">
    <location>
        <begin position="155"/>
        <end position="158"/>
    </location>
    <ligand>
        <name>substrate</name>
    </ligand>
</feature>
<feature type="binding site" evidence="1">
    <location>
        <position position="178"/>
    </location>
    <ligand>
        <name>substrate</name>
    </ligand>
</feature>
<feature type="binding site" evidence="1">
    <location>
        <begin position="183"/>
        <end position="184"/>
    </location>
    <ligand>
        <name>substrate</name>
    </ligand>
</feature>
<keyword id="KW-0378">Hydrolase</keyword>
<keyword id="KW-0460">Magnesium</keyword>
<keyword id="KW-0479">Metal-binding</keyword>
<keyword id="KW-0546">Nucleotide metabolism</keyword>
<keyword id="KW-0547">Nucleotide-binding</keyword>
<keyword id="KW-1185">Reference proteome</keyword>